<accession>P57660</accession>
<reference key="1">
    <citation type="journal article" date="2000" name="Nature">
        <title>Genome sequence of the endocellular bacterial symbiont of aphids Buchnera sp. APS.</title>
        <authorList>
            <person name="Shigenobu S."/>
            <person name="Watanabe H."/>
            <person name="Hattori M."/>
            <person name="Sakaki Y."/>
            <person name="Ishikawa H."/>
        </authorList>
    </citation>
    <scope>NUCLEOTIDE SEQUENCE [LARGE SCALE GENOMIC DNA]</scope>
    <source>
        <strain>APS</strain>
    </source>
</reference>
<gene>
    <name type="primary">hscA</name>
    <name type="ordered locus">BU605</name>
</gene>
<organism>
    <name type="scientific">Buchnera aphidicola subsp. Acyrthosiphon pisum (strain APS)</name>
    <name type="common">Acyrthosiphon pisum symbiotic bacterium</name>
    <dbReference type="NCBI Taxonomy" id="107806"/>
    <lineage>
        <taxon>Bacteria</taxon>
        <taxon>Pseudomonadati</taxon>
        <taxon>Pseudomonadota</taxon>
        <taxon>Gammaproteobacteria</taxon>
        <taxon>Enterobacterales</taxon>
        <taxon>Erwiniaceae</taxon>
        <taxon>Buchnera</taxon>
    </lineage>
</organism>
<name>HSCA_BUCAI</name>
<keyword id="KW-0067">ATP-binding</keyword>
<keyword id="KW-0143">Chaperone</keyword>
<keyword id="KW-0547">Nucleotide-binding</keyword>
<keyword id="KW-1185">Reference proteome</keyword>
<evidence type="ECO:0000250" key="1"/>
<evidence type="ECO:0000305" key="2"/>
<sequence length="611" mass="69837">MIFFKKKHDKKLLLGIDLGTTYSLAATVREKSVILLLDKKKRYLLPSVVHYKKNKISVGWKALENITEDPTNTISSVKRLLGRSINFVKKKFPILPYLIEKDIHEGIFFRTNFGNITPIDVSSHILKKLKKRAVLLFNQEIDASVITVPAYFNDFQKKETKKAAVLSGINLIRLLNEPTAAAVAYGLQKLKKGIVLVYDLGGGTFDVSILNLNKGIFEVLATSGDSNLGGDDFDDALAKNIYKKSNLQNRCNDFFQTSLLQIAKSTKLKLTKYEKVEVHFFDWKGYITREEFNLIIIDFIKKTLFICSDLLEEINLSVEQIKEVIMVGGSTRIPLVHTEVSKFFKKDLLKSINPDQVVAIGAAMHVDMLFSSKNNTKNKVILLDVMPLSLGIEVMGGFVEKIIFRNTSLPISKTKEFTTYKDNQTSILIHIVQGERELVKDCISLSRFVLRDIKPQKAGLVRILVTFQVDTDGLIHVKILENYSSKEKKIIIDNNITLKNLNISQILKDSLKHSKDDYYFRVKEEKKIECVRTLEILNKSLKKHLKLISKKELKKIKYTQEKLQKSIQEDDYFSMKNNLQKLDEVSKNFFSLQLKNAIDCSSIKNILKENI</sequence>
<feature type="chain" id="PRO_0000078619" description="Chaperone protein HscA">
    <location>
        <begin position="1"/>
        <end position="611"/>
    </location>
</feature>
<dbReference type="EMBL" id="BA000003">
    <property type="protein sequence ID" value="BAB13289.1"/>
    <property type="molecule type" value="Genomic_DNA"/>
</dbReference>
<dbReference type="RefSeq" id="NP_240403.1">
    <property type="nucleotide sequence ID" value="NC_002528.1"/>
</dbReference>
<dbReference type="RefSeq" id="WP_009874552.1">
    <property type="nucleotide sequence ID" value="NZ_AP036055.1"/>
</dbReference>
<dbReference type="SMR" id="P57660"/>
<dbReference type="STRING" id="563178.BUAP5A_597"/>
<dbReference type="EnsemblBacteria" id="BAB13289">
    <property type="protein sequence ID" value="BAB13289"/>
    <property type="gene ID" value="BAB13289"/>
</dbReference>
<dbReference type="KEGG" id="buc:BU605"/>
<dbReference type="PATRIC" id="fig|107806.10.peg.607"/>
<dbReference type="eggNOG" id="COG0443">
    <property type="taxonomic scope" value="Bacteria"/>
</dbReference>
<dbReference type="HOGENOM" id="CLU_005965_2_4_6"/>
<dbReference type="Proteomes" id="UP000001806">
    <property type="component" value="Chromosome"/>
</dbReference>
<dbReference type="GO" id="GO:0005524">
    <property type="term" value="F:ATP binding"/>
    <property type="evidence" value="ECO:0007669"/>
    <property type="project" value="UniProtKB-KW"/>
</dbReference>
<dbReference type="GO" id="GO:0016887">
    <property type="term" value="F:ATP hydrolysis activity"/>
    <property type="evidence" value="ECO:0007669"/>
    <property type="project" value="UniProtKB-UniRule"/>
</dbReference>
<dbReference type="GO" id="GO:0140662">
    <property type="term" value="F:ATP-dependent protein folding chaperone"/>
    <property type="evidence" value="ECO:0007669"/>
    <property type="project" value="InterPro"/>
</dbReference>
<dbReference type="GO" id="GO:0051082">
    <property type="term" value="F:unfolded protein binding"/>
    <property type="evidence" value="ECO:0007669"/>
    <property type="project" value="InterPro"/>
</dbReference>
<dbReference type="GO" id="GO:0016226">
    <property type="term" value="P:iron-sulfur cluster assembly"/>
    <property type="evidence" value="ECO:0007669"/>
    <property type="project" value="InterPro"/>
</dbReference>
<dbReference type="CDD" id="cd10236">
    <property type="entry name" value="ASKHA_NBD_HSP70_HscA"/>
    <property type="match status" value="1"/>
</dbReference>
<dbReference type="Gene3D" id="1.20.1270.10">
    <property type="match status" value="1"/>
</dbReference>
<dbReference type="Gene3D" id="3.30.30.30">
    <property type="match status" value="1"/>
</dbReference>
<dbReference type="Gene3D" id="3.30.420.40">
    <property type="match status" value="2"/>
</dbReference>
<dbReference type="Gene3D" id="3.90.640.10">
    <property type="entry name" value="Actin, Chain A, domain 4"/>
    <property type="match status" value="1"/>
</dbReference>
<dbReference type="Gene3D" id="2.60.34.10">
    <property type="entry name" value="Substrate Binding Domain Of DNAk, Chain A, domain 1"/>
    <property type="match status" value="1"/>
</dbReference>
<dbReference type="HAMAP" id="MF_00679">
    <property type="entry name" value="HscA"/>
    <property type="match status" value="1"/>
</dbReference>
<dbReference type="InterPro" id="IPR043129">
    <property type="entry name" value="ATPase_NBD"/>
</dbReference>
<dbReference type="InterPro" id="IPR018181">
    <property type="entry name" value="Heat_shock_70_CS"/>
</dbReference>
<dbReference type="InterPro" id="IPR042039">
    <property type="entry name" value="HscA_NBD"/>
</dbReference>
<dbReference type="InterPro" id="IPR029048">
    <property type="entry name" value="HSP70_C_sf"/>
</dbReference>
<dbReference type="InterPro" id="IPR029047">
    <property type="entry name" value="HSP70_peptide-bd_sf"/>
</dbReference>
<dbReference type="InterPro" id="IPR013126">
    <property type="entry name" value="Hsp_70_fam"/>
</dbReference>
<dbReference type="InterPro" id="IPR010236">
    <property type="entry name" value="ISC_FeS_clus_asmbl_HscA"/>
</dbReference>
<dbReference type="NCBIfam" id="TIGR01991">
    <property type="entry name" value="HscA"/>
    <property type="match status" value="1"/>
</dbReference>
<dbReference type="NCBIfam" id="NF003520">
    <property type="entry name" value="PRK05183.1"/>
    <property type="match status" value="1"/>
</dbReference>
<dbReference type="PANTHER" id="PTHR19375">
    <property type="entry name" value="HEAT SHOCK PROTEIN 70KDA"/>
    <property type="match status" value="1"/>
</dbReference>
<dbReference type="Pfam" id="PF00012">
    <property type="entry name" value="HSP70"/>
    <property type="match status" value="1"/>
</dbReference>
<dbReference type="PRINTS" id="PR00301">
    <property type="entry name" value="HEATSHOCK70"/>
</dbReference>
<dbReference type="SUPFAM" id="SSF53067">
    <property type="entry name" value="Actin-like ATPase domain"/>
    <property type="match status" value="2"/>
</dbReference>
<dbReference type="SUPFAM" id="SSF100934">
    <property type="entry name" value="Heat shock protein 70kD (HSP70), C-terminal subdomain"/>
    <property type="match status" value="1"/>
</dbReference>
<dbReference type="SUPFAM" id="SSF100920">
    <property type="entry name" value="Heat shock protein 70kD (HSP70), peptide-binding domain"/>
    <property type="match status" value="1"/>
</dbReference>
<dbReference type="PROSITE" id="PS00297">
    <property type="entry name" value="HSP70_1"/>
    <property type="match status" value="1"/>
</dbReference>
<dbReference type="PROSITE" id="PS00329">
    <property type="entry name" value="HSP70_2"/>
    <property type="match status" value="1"/>
</dbReference>
<dbReference type="PROSITE" id="PS01036">
    <property type="entry name" value="HSP70_3"/>
    <property type="match status" value="1"/>
</dbReference>
<proteinExistence type="inferred from homology"/>
<comment type="function">
    <text evidence="1">Chaperone involved in the maturation of iron-sulfur cluster-containing proteins. Has a low intrinsic ATPase activity which is markedly stimulated by HscB. Involved in the maturation of IscU (By similarity).</text>
</comment>
<comment type="similarity">
    <text evidence="2">Belongs to the heat shock protein 70 family.</text>
</comment>
<protein>
    <recommendedName>
        <fullName>Chaperone protein HscA</fullName>
    </recommendedName>
</protein>